<keyword id="KW-0963">Cytoplasm</keyword>
<keyword id="KW-0664">Pyridoxine biosynthesis</keyword>
<keyword id="KW-1185">Reference proteome</keyword>
<keyword id="KW-0808">Transferase</keyword>
<comment type="function">
    <text evidence="1">Catalyzes the complicated ring closure reaction between the two acyclic compounds 1-deoxy-D-xylulose-5-phosphate (DXP) and 3-amino-2-oxopropyl phosphate (1-amino-acetone-3-phosphate or AAP) to form pyridoxine 5'-phosphate (PNP) and inorganic phosphate.</text>
</comment>
<comment type="catalytic activity">
    <reaction evidence="1">
        <text>3-amino-2-oxopropyl phosphate + 1-deoxy-D-xylulose 5-phosphate = pyridoxine 5'-phosphate + phosphate + 2 H2O + H(+)</text>
        <dbReference type="Rhea" id="RHEA:15265"/>
        <dbReference type="ChEBI" id="CHEBI:15377"/>
        <dbReference type="ChEBI" id="CHEBI:15378"/>
        <dbReference type="ChEBI" id="CHEBI:43474"/>
        <dbReference type="ChEBI" id="CHEBI:57279"/>
        <dbReference type="ChEBI" id="CHEBI:57792"/>
        <dbReference type="ChEBI" id="CHEBI:58589"/>
        <dbReference type="EC" id="2.6.99.2"/>
    </reaction>
</comment>
<comment type="pathway">
    <text evidence="1">Cofactor biosynthesis; pyridoxine 5'-phosphate biosynthesis; pyridoxine 5'-phosphate from D-erythrose 4-phosphate: step 5/5.</text>
</comment>
<comment type="subunit">
    <text evidence="1">Homooctamer; tetramer of dimers.</text>
</comment>
<comment type="subcellular location">
    <subcellularLocation>
        <location evidence="1">Cytoplasm</location>
    </subcellularLocation>
</comment>
<comment type="similarity">
    <text evidence="1">Belongs to the PNP synthase family.</text>
</comment>
<organism>
    <name type="scientific">Pseudomonas putida (strain ATCC 47054 / DSM 6125 / CFBP 8728 / NCIMB 11950 / KT2440)</name>
    <dbReference type="NCBI Taxonomy" id="160488"/>
    <lineage>
        <taxon>Bacteria</taxon>
        <taxon>Pseudomonadati</taxon>
        <taxon>Pseudomonadota</taxon>
        <taxon>Gammaproteobacteria</taxon>
        <taxon>Pseudomonadales</taxon>
        <taxon>Pseudomonadaceae</taxon>
        <taxon>Pseudomonas</taxon>
    </lineage>
</organism>
<feature type="chain" id="PRO_0000190124" description="Pyridoxine 5'-phosphate synthase">
    <location>
        <begin position="1"/>
        <end position="246"/>
    </location>
</feature>
<feature type="active site" description="Proton acceptor" evidence="1">
    <location>
        <position position="48"/>
    </location>
</feature>
<feature type="active site" description="Proton acceptor" evidence="1">
    <location>
        <position position="75"/>
    </location>
</feature>
<feature type="active site" description="Proton donor" evidence="1">
    <location>
        <position position="196"/>
    </location>
</feature>
<feature type="binding site" evidence="1">
    <location>
        <position position="12"/>
    </location>
    <ligand>
        <name>3-amino-2-oxopropyl phosphate</name>
        <dbReference type="ChEBI" id="CHEBI:57279"/>
    </ligand>
</feature>
<feature type="binding site" evidence="1">
    <location>
        <begin position="14"/>
        <end position="15"/>
    </location>
    <ligand>
        <name>1-deoxy-D-xylulose 5-phosphate</name>
        <dbReference type="ChEBI" id="CHEBI:57792"/>
    </ligand>
</feature>
<feature type="binding site" evidence="1">
    <location>
        <position position="23"/>
    </location>
    <ligand>
        <name>3-amino-2-oxopropyl phosphate</name>
        <dbReference type="ChEBI" id="CHEBI:57279"/>
    </ligand>
</feature>
<feature type="binding site" evidence="1">
    <location>
        <position position="50"/>
    </location>
    <ligand>
        <name>1-deoxy-D-xylulose 5-phosphate</name>
        <dbReference type="ChEBI" id="CHEBI:57792"/>
    </ligand>
</feature>
<feature type="binding site" evidence="1">
    <location>
        <position position="55"/>
    </location>
    <ligand>
        <name>1-deoxy-D-xylulose 5-phosphate</name>
        <dbReference type="ChEBI" id="CHEBI:57792"/>
    </ligand>
</feature>
<feature type="binding site" evidence="1">
    <location>
        <position position="105"/>
    </location>
    <ligand>
        <name>1-deoxy-D-xylulose 5-phosphate</name>
        <dbReference type="ChEBI" id="CHEBI:57792"/>
    </ligand>
</feature>
<feature type="binding site" evidence="1">
    <location>
        <position position="197"/>
    </location>
    <ligand>
        <name>3-amino-2-oxopropyl phosphate</name>
        <dbReference type="ChEBI" id="CHEBI:57279"/>
    </ligand>
</feature>
<feature type="binding site" evidence="1">
    <location>
        <begin position="218"/>
        <end position="219"/>
    </location>
    <ligand>
        <name>3-amino-2-oxopropyl phosphate</name>
        <dbReference type="ChEBI" id="CHEBI:57279"/>
    </ligand>
</feature>
<feature type="site" description="Transition state stabilizer" evidence="1">
    <location>
        <position position="156"/>
    </location>
</feature>
<reference key="1">
    <citation type="journal article" date="2002" name="Environ. Microbiol.">
        <title>Complete genome sequence and comparative analysis of the metabolically versatile Pseudomonas putida KT2440.</title>
        <authorList>
            <person name="Nelson K.E."/>
            <person name="Weinel C."/>
            <person name="Paulsen I.T."/>
            <person name="Dodson R.J."/>
            <person name="Hilbert H."/>
            <person name="Martins dos Santos V.A.P."/>
            <person name="Fouts D.E."/>
            <person name="Gill S.R."/>
            <person name="Pop M."/>
            <person name="Holmes M."/>
            <person name="Brinkac L.M."/>
            <person name="Beanan M.J."/>
            <person name="DeBoy R.T."/>
            <person name="Daugherty S.C."/>
            <person name="Kolonay J.F."/>
            <person name="Madupu R."/>
            <person name="Nelson W.C."/>
            <person name="White O."/>
            <person name="Peterson J.D."/>
            <person name="Khouri H.M."/>
            <person name="Hance I."/>
            <person name="Chris Lee P."/>
            <person name="Holtzapple E.K."/>
            <person name="Scanlan D."/>
            <person name="Tran K."/>
            <person name="Moazzez A."/>
            <person name="Utterback T.R."/>
            <person name="Rizzo M."/>
            <person name="Lee K."/>
            <person name="Kosack D."/>
            <person name="Moestl D."/>
            <person name="Wedler H."/>
            <person name="Lauber J."/>
            <person name="Stjepandic D."/>
            <person name="Hoheisel J."/>
            <person name="Straetz M."/>
            <person name="Heim S."/>
            <person name="Kiewitz C."/>
            <person name="Eisen J.A."/>
            <person name="Timmis K.N."/>
            <person name="Duesterhoeft A."/>
            <person name="Tuemmler B."/>
            <person name="Fraser C.M."/>
        </authorList>
    </citation>
    <scope>NUCLEOTIDE SEQUENCE [LARGE SCALE GENOMIC DNA]</scope>
    <source>
        <strain>ATCC 47054 / DSM 6125 / CFBP 8728 / NCIMB 11950 / KT2440</strain>
    </source>
</reference>
<name>PDXJ_PSEPK</name>
<evidence type="ECO:0000255" key="1">
    <source>
        <dbReference type="HAMAP-Rule" id="MF_00279"/>
    </source>
</evidence>
<sequence length="246" mass="26738">MTHSNRMLLGVNIDHVATLRQARGTRYPDPVKAALDAEEAGADGITVHLREDRRHIQERDVVLLKDVLQTRMNFEMGVTEEMMAFAEKIRPAHICLVPETRQELTTEGGLDVAGQEARIKAAVERLARTGAEVSLFIDADERQIEASRRVGAPAIELHTGRYADAETPTEVAEELKRIVEGVAFGVGHGLIVNAGHGLHYHNVEAVAAIKGINELNIGHALVAHALFVGFKAAVAEMKALIVAASR</sequence>
<proteinExistence type="inferred from homology"/>
<protein>
    <recommendedName>
        <fullName evidence="1">Pyridoxine 5'-phosphate synthase</fullName>
        <shortName evidence="1">PNP synthase</shortName>
        <ecNumber evidence="1">2.6.99.2</ecNumber>
    </recommendedName>
</protein>
<accession>Q88MY2</accession>
<gene>
    <name evidence="1" type="primary">pdxJ</name>
    <name type="ordered locus">PP_1436</name>
</gene>
<dbReference type="EC" id="2.6.99.2" evidence="1"/>
<dbReference type="EMBL" id="AE015451">
    <property type="protein sequence ID" value="AAN67058.1"/>
    <property type="molecule type" value="Genomic_DNA"/>
</dbReference>
<dbReference type="RefSeq" id="NP_743594.1">
    <property type="nucleotide sequence ID" value="NC_002947.4"/>
</dbReference>
<dbReference type="RefSeq" id="WP_010952538.1">
    <property type="nucleotide sequence ID" value="NC_002947.4"/>
</dbReference>
<dbReference type="SMR" id="Q88MY2"/>
<dbReference type="STRING" id="160488.PP_1436"/>
<dbReference type="PaxDb" id="160488-PP_1436"/>
<dbReference type="GeneID" id="83682029"/>
<dbReference type="KEGG" id="ppu:PP_1436"/>
<dbReference type="PATRIC" id="fig|160488.4.peg.1524"/>
<dbReference type="eggNOG" id="COG0854">
    <property type="taxonomic scope" value="Bacteria"/>
</dbReference>
<dbReference type="HOGENOM" id="CLU_074563_0_0_6"/>
<dbReference type="OrthoDB" id="9806590at2"/>
<dbReference type="PhylomeDB" id="Q88MY2"/>
<dbReference type="BioCyc" id="PPUT160488:G1G01-1528-MONOMER"/>
<dbReference type="UniPathway" id="UPA00244">
    <property type="reaction ID" value="UER00313"/>
</dbReference>
<dbReference type="Proteomes" id="UP000000556">
    <property type="component" value="Chromosome"/>
</dbReference>
<dbReference type="GO" id="GO:0005829">
    <property type="term" value="C:cytosol"/>
    <property type="evidence" value="ECO:0007669"/>
    <property type="project" value="TreeGrafter"/>
</dbReference>
<dbReference type="GO" id="GO:0033856">
    <property type="term" value="F:pyridoxine 5'-phosphate synthase activity"/>
    <property type="evidence" value="ECO:0007669"/>
    <property type="project" value="UniProtKB-EC"/>
</dbReference>
<dbReference type="GO" id="GO:0008615">
    <property type="term" value="P:pyridoxine biosynthetic process"/>
    <property type="evidence" value="ECO:0007669"/>
    <property type="project" value="UniProtKB-UniRule"/>
</dbReference>
<dbReference type="CDD" id="cd00003">
    <property type="entry name" value="PNPsynthase"/>
    <property type="match status" value="1"/>
</dbReference>
<dbReference type="FunFam" id="3.20.20.70:FF:000042">
    <property type="entry name" value="Pyridoxine 5'-phosphate synthase"/>
    <property type="match status" value="1"/>
</dbReference>
<dbReference type="Gene3D" id="3.20.20.70">
    <property type="entry name" value="Aldolase class I"/>
    <property type="match status" value="1"/>
</dbReference>
<dbReference type="HAMAP" id="MF_00279">
    <property type="entry name" value="PdxJ"/>
    <property type="match status" value="1"/>
</dbReference>
<dbReference type="InterPro" id="IPR013785">
    <property type="entry name" value="Aldolase_TIM"/>
</dbReference>
<dbReference type="InterPro" id="IPR004569">
    <property type="entry name" value="PyrdxlP_synth_PdxJ"/>
</dbReference>
<dbReference type="InterPro" id="IPR036130">
    <property type="entry name" value="Pyridoxine-5'_phos_synth"/>
</dbReference>
<dbReference type="NCBIfam" id="TIGR00559">
    <property type="entry name" value="pdxJ"/>
    <property type="match status" value="1"/>
</dbReference>
<dbReference type="NCBIfam" id="NF003623">
    <property type="entry name" value="PRK05265.1-1"/>
    <property type="match status" value="1"/>
</dbReference>
<dbReference type="NCBIfam" id="NF003625">
    <property type="entry name" value="PRK05265.1-3"/>
    <property type="match status" value="1"/>
</dbReference>
<dbReference type="NCBIfam" id="NF003627">
    <property type="entry name" value="PRK05265.1-5"/>
    <property type="match status" value="1"/>
</dbReference>
<dbReference type="PANTHER" id="PTHR30456">
    <property type="entry name" value="PYRIDOXINE 5'-PHOSPHATE SYNTHASE"/>
    <property type="match status" value="1"/>
</dbReference>
<dbReference type="PANTHER" id="PTHR30456:SF0">
    <property type="entry name" value="PYRIDOXINE 5'-PHOSPHATE SYNTHASE"/>
    <property type="match status" value="1"/>
</dbReference>
<dbReference type="Pfam" id="PF03740">
    <property type="entry name" value="PdxJ"/>
    <property type="match status" value="1"/>
</dbReference>
<dbReference type="SUPFAM" id="SSF63892">
    <property type="entry name" value="Pyridoxine 5'-phosphate synthase"/>
    <property type="match status" value="1"/>
</dbReference>